<accession>B2HWT3</accession>
<gene>
    <name evidence="1" type="primary">ruvB</name>
    <name type="ordered locus">ACICU_02830</name>
</gene>
<comment type="function">
    <text evidence="1">The RuvA-RuvB-RuvC complex processes Holliday junction (HJ) DNA during genetic recombination and DNA repair, while the RuvA-RuvB complex plays an important role in the rescue of blocked DNA replication forks via replication fork reversal (RFR). RuvA specifically binds to HJ cruciform DNA, conferring on it an open structure. The RuvB hexamer acts as an ATP-dependent pump, pulling dsDNA into and through the RuvAB complex. RuvB forms 2 homohexamers on either side of HJ DNA bound by 1 or 2 RuvA tetramers; 4 subunits per hexamer contact DNA at a time. Coordinated motions by a converter formed by DNA-disengaged RuvB subunits stimulates ATP hydrolysis and nucleotide exchange. Immobilization of the converter enables RuvB to convert the ATP-contained energy into a lever motion, pulling 2 nucleotides of DNA out of the RuvA tetramer per ATP hydrolyzed, thus driving DNA branch migration. The RuvB motors rotate together with the DNA substrate, which together with the progressing nucleotide cycle form the mechanistic basis for DNA recombination by continuous HJ branch migration. Branch migration allows RuvC to scan DNA until it finds its consensus sequence, where it cleaves and resolves cruciform DNA.</text>
</comment>
<comment type="catalytic activity">
    <reaction evidence="1">
        <text>ATP + H2O = ADP + phosphate + H(+)</text>
        <dbReference type="Rhea" id="RHEA:13065"/>
        <dbReference type="ChEBI" id="CHEBI:15377"/>
        <dbReference type="ChEBI" id="CHEBI:15378"/>
        <dbReference type="ChEBI" id="CHEBI:30616"/>
        <dbReference type="ChEBI" id="CHEBI:43474"/>
        <dbReference type="ChEBI" id="CHEBI:456216"/>
    </reaction>
</comment>
<comment type="subunit">
    <text evidence="1">Homohexamer. Forms an RuvA(8)-RuvB(12)-Holliday junction (HJ) complex. HJ DNA is sandwiched between 2 RuvA tetramers; dsDNA enters through RuvA and exits via RuvB. An RuvB hexamer assembles on each DNA strand where it exits the tetramer. Each RuvB hexamer is contacted by two RuvA subunits (via domain III) on 2 adjacent RuvB subunits; this complex drives branch migration. In the full resolvosome a probable DNA-RuvA(4)-RuvB(12)-RuvC(2) complex forms which resolves the HJ.</text>
</comment>
<comment type="subcellular location">
    <subcellularLocation>
        <location evidence="1">Cytoplasm</location>
    </subcellularLocation>
</comment>
<comment type="domain">
    <text evidence="1">Has 3 domains, the large (RuvB-L) and small ATPase (RuvB-S) domains and the C-terminal head (RuvB-H) domain. The head domain binds DNA, while the ATPase domains jointly bind ATP, ADP or are empty depending on the state of the subunit in the translocation cycle. During a single DNA translocation step the structure of each domain remains the same, but their relative positions change.</text>
</comment>
<comment type="similarity">
    <text evidence="1">Belongs to the RuvB family.</text>
</comment>
<evidence type="ECO:0000255" key="1">
    <source>
        <dbReference type="HAMAP-Rule" id="MF_00016"/>
    </source>
</evidence>
<sequence>MQDRLISGTEKPEDHFDRAIRPTSLADYIGQPVVREQMEIFIGAARGRGEALDHTLIFGPPGLGKTTLANIIAREMGGNLKSTSGPVLERAGDLAAMLTNLEEGDVLFIDEIHRLSPVIEEILYPAMEDYQLDIMIGEGPAARSIKLDLPPFTLVAATTRAGLLTSPLRDRFGIVQRLEFYSVEDLTHIVSRSANLMDVPITVEGAEEVARRSRGTPRIANRLLRRVRDYAQVKGTGEVNHEMAQRALDMLNVDKAGLDTLDRRYLSMLLERFDGGPAGVEALAAAMAEDSGTLEDVIEPYLIQQGYVMRTARGRIATNQSYLQFGMTPPEPKN</sequence>
<reference key="1">
    <citation type="journal article" date="2008" name="Antimicrob. Agents Chemother.">
        <title>Whole-genome pyrosequencing of an epidemic multidrug-resistant Acinetobacter baumannii strain belonging to the European clone II group.</title>
        <authorList>
            <person name="Iacono M."/>
            <person name="Villa L."/>
            <person name="Fortini D."/>
            <person name="Bordoni R."/>
            <person name="Imperi F."/>
            <person name="Bonnal R.J."/>
            <person name="Sicheritz-Ponten T."/>
            <person name="De Bellis G."/>
            <person name="Visca P."/>
            <person name="Cassone A."/>
            <person name="Carattoli A."/>
        </authorList>
    </citation>
    <scope>NUCLEOTIDE SEQUENCE [LARGE SCALE GENOMIC DNA]</scope>
    <source>
        <strain>ACICU</strain>
    </source>
</reference>
<organism>
    <name type="scientific">Acinetobacter baumannii (strain ACICU)</name>
    <dbReference type="NCBI Taxonomy" id="405416"/>
    <lineage>
        <taxon>Bacteria</taxon>
        <taxon>Pseudomonadati</taxon>
        <taxon>Pseudomonadota</taxon>
        <taxon>Gammaproteobacteria</taxon>
        <taxon>Moraxellales</taxon>
        <taxon>Moraxellaceae</taxon>
        <taxon>Acinetobacter</taxon>
        <taxon>Acinetobacter calcoaceticus/baumannii complex</taxon>
    </lineage>
</organism>
<name>RUVB_ACIBC</name>
<dbReference type="EC" id="3.6.4.-" evidence="1"/>
<dbReference type="EMBL" id="CP000863">
    <property type="protein sequence ID" value="ACC58142.1"/>
    <property type="molecule type" value="Genomic_DNA"/>
</dbReference>
<dbReference type="RefSeq" id="WP_001154002.1">
    <property type="nucleotide sequence ID" value="NZ_CP031380.1"/>
</dbReference>
<dbReference type="SMR" id="B2HWT3"/>
<dbReference type="GeneID" id="92894861"/>
<dbReference type="KEGG" id="abc:ACICU_02830"/>
<dbReference type="HOGENOM" id="CLU_055599_1_0_6"/>
<dbReference type="Proteomes" id="UP000008839">
    <property type="component" value="Chromosome"/>
</dbReference>
<dbReference type="GO" id="GO:0005737">
    <property type="term" value="C:cytoplasm"/>
    <property type="evidence" value="ECO:0007669"/>
    <property type="project" value="UniProtKB-SubCell"/>
</dbReference>
<dbReference type="GO" id="GO:0048476">
    <property type="term" value="C:Holliday junction resolvase complex"/>
    <property type="evidence" value="ECO:0007669"/>
    <property type="project" value="UniProtKB-UniRule"/>
</dbReference>
<dbReference type="GO" id="GO:0005524">
    <property type="term" value="F:ATP binding"/>
    <property type="evidence" value="ECO:0007669"/>
    <property type="project" value="UniProtKB-UniRule"/>
</dbReference>
<dbReference type="GO" id="GO:0016887">
    <property type="term" value="F:ATP hydrolysis activity"/>
    <property type="evidence" value="ECO:0007669"/>
    <property type="project" value="InterPro"/>
</dbReference>
<dbReference type="GO" id="GO:0000400">
    <property type="term" value="F:four-way junction DNA binding"/>
    <property type="evidence" value="ECO:0007669"/>
    <property type="project" value="UniProtKB-UniRule"/>
</dbReference>
<dbReference type="GO" id="GO:0009378">
    <property type="term" value="F:four-way junction helicase activity"/>
    <property type="evidence" value="ECO:0007669"/>
    <property type="project" value="InterPro"/>
</dbReference>
<dbReference type="GO" id="GO:0006310">
    <property type="term" value="P:DNA recombination"/>
    <property type="evidence" value="ECO:0007669"/>
    <property type="project" value="UniProtKB-UniRule"/>
</dbReference>
<dbReference type="GO" id="GO:0006281">
    <property type="term" value="P:DNA repair"/>
    <property type="evidence" value="ECO:0007669"/>
    <property type="project" value="UniProtKB-UniRule"/>
</dbReference>
<dbReference type="CDD" id="cd00009">
    <property type="entry name" value="AAA"/>
    <property type="match status" value="1"/>
</dbReference>
<dbReference type="FunFam" id="1.10.8.60:FF:000023">
    <property type="entry name" value="Holliday junction ATP-dependent DNA helicase RuvB"/>
    <property type="match status" value="1"/>
</dbReference>
<dbReference type="FunFam" id="3.40.50.300:FF:000073">
    <property type="entry name" value="Holliday junction ATP-dependent DNA helicase RuvB"/>
    <property type="match status" value="1"/>
</dbReference>
<dbReference type="Gene3D" id="1.10.8.60">
    <property type="match status" value="1"/>
</dbReference>
<dbReference type="Gene3D" id="3.40.50.300">
    <property type="entry name" value="P-loop containing nucleotide triphosphate hydrolases"/>
    <property type="match status" value="1"/>
</dbReference>
<dbReference type="Gene3D" id="1.10.10.10">
    <property type="entry name" value="Winged helix-like DNA-binding domain superfamily/Winged helix DNA-binding domain"/>
    <property type="match status" value="1"/>
</dbReference>
<dbReference type="HAMAP" id="MF_00016">
    <property type="entry name" value="DNA_HJ_migration_RuvB"/>
    <property type="match status" value="1"/>
</dbReference>
<dbReference type="InterPro" id="IPR003593">
    <property type="entry name" value="AAA+_ATPase"/>
</dbReference>
<dbReference type="InterPro" id="IPR041445">
    <property type="entry name" value="AAA_lid_4"/>
</dbReference>
<dbReference type="InterPro" id="IPR004605">
    <property type="entry name" value="DNA_helicase_Holl-junc_RuvB"/>
</dbReference>
<dbReference type="InterPro" id="IPR027417">
    <property type="entry name" value="P-loop_NTPase"/>
</dbReference>
<dbReference type="InterPro" id="IPR008824">
    <property type="entry name" value="RuvB-like_N"/>
</dbReference>
<dbReference type="InterPro" id="IPR008823">
    <property type="entry name" value="RuvB_C"/>
</dbReference>
<dbReference type="InterPro" id="IPR036388">
    <property type="entry name" value="WH-like_DNA-bd_sf"/>
</dbReference>
<dbReference type="InterPro" id="IPR036390">
    <property type="entry name" value="WH_DNA-bd_sf"/>
</dbReference>
<dbReference type="NCBIfam" id="NF000868">
    <property type="entry name" value="PRK00080.1"/>
    <property type="match status" value="1"/>
</dbReference>
<dbReference type="NCBIfam" id="TIGR00635">
    <property type="entry name" value="ruvB"/>
    <property type="match status" value="1"/>
</dbReference>
<dbReference type="PANTHER" id="PTHR42848">
    <property type="match status" value="1"/>
</dbReference>
<dbReference type="PANTHER" id="PTHR42848:SF1">
    <property type="entry name" value="HOLLIDAY JUNCTION BRANCH MIGRATION COMPLEX SUBUNIT RUVB"/>
    <property type="match status" value="1"/>
</dbReference>
<dbReference type="Pfam" id="PF17864">
    <property type="entry name" value="AAA_lid_4"/>
    <property type="match status" value="1"/>
</dbReference>
<dbReference type="Pfam" id="PF05491">
    <property type="entry name" value="RuvB_C"/>
    <property type="match status" value="1"/>
</dbReference>
<dbReference type="Pfam" id="PF05496">
    <property type="entry name" value="RuvB_N"/>
    <property type="match status" value="1"/>
</dbReference>
<dbReference type="SMART" id="SM00382">
    <property type="entry name" value="AAA"/>
    <property type="match status" value="1"/>
</dbReference>
<dbReference type="SUPFAM" id="SSF52540">
    <property type="entry name" value="P-loop containing nucleoside triphosphate hydrolases"/>
    <property type="match status" value="1"/>
</dbReference>
<dbReference type="SUPFAM" id="SSF46785">
    <property type="entry name" value="Winged helix' DNA-binding domain"/>
    <property type="match status" value="1"/>
</dbReference>
<keyword id="KW-0067">ATP-binding</keyword>
<keyword id="KW-0963">Cytoplasm</keyword>
<keyword id="KW-0227">DNA damage</keyword>
<keyword id="KW-0233">DNA recombination</keyword>
<keyword id="KW-0234">DNA repair</keyword>
<keyword id="KW-0238">DNA-binding</keyword>
<keyword id="KW-0378">Hydrolase</keyword>
<keyword id="KW-0547">Nucleotide-binding</keyword>
<feature type="chain" id="PRO_1000089609" description="Holliday junction branch migration complex subunit RuvB">
    <location>
        <begin position="1"/>
        <end position="334"/>
    </location>
</feature>
<feature type="region of interest" description="Large ATPase domain (RuvB-L)" evidence="1">
    <location>
        <begin position="1"/>
        <end position="181"/>
    </location>
</feature>
<feature type="region of interest" description="Small ATPAse domain (RuvB-S)" evidence="1">
    <location>
        <begin position="182"/>
        <end position="252"/>
    </location>
</feature>
<feature type="region of interest" description="Head domain (RuvB-H)" evidence="1">
    <location>
        <begin position="255"/>
        <end position="334"/>
    </location>
</feature>
<feature type="binding site" evidence="1">
    <location>
        <position position="20"/>
    </location>
    <ligand>
        <name>ATP</name>
        <dbReference type="ChEBI" id="CHEBI:30616"/>
    </ligand>
</feature>
<feature type="binding site" evidence="1">
    <location>
        <position position="21"/>
    </location>
    <ligand>
        <name>ATP</name>
        <dbReference type="ChEBI" id="CHEBI:30616"/>
    </ligand>
</feature>
<feature type="binding site" evidence="1">
    <location>
        <position position="62"/>
    </location>
    <ligand>
        <name>ATP</name>
        <dbReference type="ChEBI" id="CHEBI:30616"/>
    </ligand>
</feature>
<feature type="binding site" evidence="1">
    <location>
        <position position="65"/>
    </location>
    <ligand>
        <name>ATP</name>
        <dbReference type="ChEBI" id="CHEBI:30616"/>
    </ligand>
</feature>
<feature type="binding site" evidence="1">
    <location>
        <position position="66"/>
    </location>
    <ligand>
        <name>ATP</name>
        <dbReference type="ChEBI" id="CHEBI:30616"/>
    </ligand>
</feature>
<feature type="binding site" evidence="1">
    <location>
        <position position="66"/>
    </location>
    <ligand>
        <name>Mg(2+)</name>
        <dbReference type="ChEBI" id="CHEBI:18420"/>
    </ligand>
</feature>
<feature type="binding site" evidence="1">
    <location>
        <position position="67"/>
    </location>
    <ligand>
        <name>ATP</name>
        <dbReference type="ChEBI" id="CHEBI:30616"/>
    </ligand>
</feature>
<feature type="binding site" evidence="1">
    <location>
        <begin position="128"/>
        <end position="130"/>
    </location>
    <ligand>
        <name>ATP</name>
        <dbReference type="ChEBI" id="CHEBI:30616"/>
    </ligand>
</feature>
<feature type="binding site" evidence="1">
    <location>
        <position position="171"/>
    </location>
    <ligand>
        <name>ATP</name>
        <dbReference type="ChEBI" id="CHEBI:30616"/>
    </ligand>
</feature>
<feature type="binding site" evidence="1">
    <location>
        <position position="181"/>
    </location>
    <ligand>
        <name>ATP</name>
        <dbReference type="ChEBI" id="CHEBI:30616"/>
    </ligand>
</feature>
<feature type="binding site" evidence="1">
    <location>
        <position position="218"/>
    </location>
    <ligand>
        <name>ATP</name>
        <dbReference type="ChEBI" id="CHEBI:30616"/>
    </ligand>
</feature>
<feature type="binding site" evidence="1">
    <location>
        <position position="310"/>
    </location>
    <ligand>
        <name>DNA</name>
        <dbReference type="ChEBI" id="CHEBI:16991"/>
    </ligand>
</feature>
<feature type="binding site" evidence="1">
    <location>
        <position position="315"/>
    </location>
    <ligand>
        <name>DNA</name>
        <dbReference type="ChEBI" id="CHEBI:16991"/>
    </ligand>
</feature>
<proteinExistence type="inferred from homology"/>
<protein>
    <recommendedName>
        <fullName evidence="1">Holliday junction branch migration complex subunit RuvB</fullName>
        <ecNumber evidence="1">3.6.4.-</ecNumber>
    </recommendedName>
</protein>